<dbReference type="EMBL" id="AY705447">
    <property type="protein sequence ID" value="AAV84285.1"/>
    <property type="molecule type" value="mRNA"/>
</dbReference>
<dbReference type="EMBL" id="AY705448">
    <property type="protein sequence ID" value="AAW19058.2"/>
    <property type="molecule type" value="mRNA"/>
</dbReference>
<dbReference type="EMBL" id="AY858690">
    <property type="protein sequence ID" value="AAW51130.1"/>
    <property type="molecule type" value="Genomic_DNA"/>
</dbReference>
<dbReference type="EMBL" id="DQ076089">
    <property type="protein sequence ID" value="AAZ31543.1"/>
    <property type="molecule type" value="Genomic_DNA"/>
</dbReference>
<dbReference type="EMBL" id="DQ076090">
    <property type="protein sequence ID" value="AAW19080.2"/>
    <property type="molecule type" value="Genomic_DNA"/>
</dbReference>
<dbReference type="EMBL" id="DQ076091">
    <property type="protein sequence ID" value="AAZ31544.1"/>
    <property type="molecule type" value="mRNA"/>
</dbReference>
<dbReference type="EMBL" id="DQ076092">
    <property type="protein sequence ID" value="AAZ31545.1"/>
    <property type="molecule type" value="mRNA"/>
</dbReference>
<dbReference type="EMBL" id="AY340938">
    <property type="protein sequence ID" value="AAQ24843.1"/>
    <property type="molecule type" value="mRNA"/>
</dbReference>
<dbReference type="RefSeq" id="NP_001185623.2">
    <molecule id="Q5MNU5-1"/>
    <property type="nucleotide sequence ID" value="NM_001198694.2"/>
</dbReference>
<dbReference type="SMR" id="Q5MNU5"/>
<dbReference type="FunCoup" id="Q5MNU5">
    <property type="interactions" value="1657"/>
</dbReference>
<dbReference type="STRING" id="9823.ENSSSCP00000026028"/>
<dbReference type="GlyCosmos" id="Q5MNU5">
    <property type="glycosylation" value="3 sites, No reported glycans"/>
</dbReference>
<dbReference type="GlyGen" id="Q5MNU5">
    <property type="glycosylation" value="4 sites"/>
</dbReference>
<dbReference type="PaxDb" id="9823-ENSSSCP00000026028"/>
<dbReference type="PeptideAtlas" id="Q5MNU5"/>
<dbReference type="GeneID" id="494015"/>
<dbReference type="KEGG" id="ssc:494015"/>
<dbReference type="CTD" id="22937"/>
<dbReference type="eggNOG" id="KOG1933">
    <property type="taxonomic scope" value="Eukaryota"/>
</dbReference>
<dbReference type="InParanoid" id="Q5MNU5"/>
<dbReference type="OrthoDB" id="361494at2759"/>
<dbReference type="Proteomes" id="UP000008227">
    <property type="component" value="Unplaced"/>
</dbReference>
<dbReference type="Proteomes" id="UP000314985">
    <property type="component" value="Unplaced"/>
</dbReference>
<dbReference type="Proteomes" id="UP000694570">
    <property type="component" value="Unplaced"/>
</dbReference>
<dbReference type="Proteomes" id="UP000694571">
    <property type="component" value="Unplaced"/>
</dbReference>
<dbReference type="Proteomes" id="UP000694720">
    <property type="component" value="Unplaced"/>
</dbReference>
<dbReference type="Proteomes" id="UP000694722">
    <property type="component" value="Unplaced"/>
</dbReference>
<dbReference type="Proteomes" id="UP000694723">
    <property type="component" value="Unplaced"/>
</dbReference>
<dbReference type="Proteomes" id="UP000694724">
    <property type="component" value="Unplaced"/>
</dbReference>
<dbReference type="Proteomes" id="UP000694725">
    <property type="component" value="Unplaced"/>
</dbReference>
<dbReference type="Proteomes" id="UP000694726">
    <property type="component" value="Unplaced"/>
</dbReference>
<dbReference type="Proteomes" id="UP000694727">
    <property type="component" value="Unplaced"/>
</dbReference>
<dbReference type="Proteomes" id="UP000694728">
    <property type="component" value="Unplaced"/>
</dbReference>
<dbReference type="GO" id="GO:0005789">
    <property type="term" value="C:endoplasmic reticulum membrane"/>
    <property type="evidence" value="ECO:0000250"/>
    <property type="project" value="UniProtKB"/>
</dbReference>
<dbReference type="GO" id="GO:0012507">
    <property type="term" value="C:ER to Golgi transport vesicle membrane"/>
    <property type="evidence" value="ECO:0007669"/>
    <property type="project" value="UniProtKB-SubCell"/>
</dbReference>
<dbReference type="GO" id="GO:0000139">
    <property type="term" value="C:Golgi membrane"/>
    <property type="evidence" value="ECO:0000250"/>
    <property type="project" value="UniProtKB"/>
</dbReference>
<dbReference type="GO" id="GO:0032936">
    <property type="term" value="C:SREBP-SCAP complex"/>
    <property type="evidence" value="ECO:0000318"/>
    <property type="project" value="GO_Central"/>
</dbReference>
<dbReference type="GO" id="GO:0032934">
    <property type="term" value="F:sterol binding"/>
    <property type="evidence" value="ECO:0000250"/>
    <property type="project" value="UniProtKB"/>
</dbReference>
<dbReference type="GO" id="GO:0008203">
    <property type="term" value="P:cholesterol metabolic process"/>
    <property type="evidence" value="ECO:0000250"/>
    <property type="project" value="UniProtKB"/>
</dbReference>
<dbReference type="GO" id="GO:0090110">
    <property type="term" value="P:COPII-coated vesicle cargo loading"/>
    <property type="evidence" value="ECO:0000250"/>
    <property type="project" value="UniProtKB"/>
</dbReference>
<dbReference type="GO" id="GO:0045540">
    <property type="term" value="P:regulation of cholesterol biosynthetic process"/>
    <property type="evidence" value="ECO:0000318"/>
    <property type="project" value="GO_Central"/>
</dbReference>
<dbReference type="GO" id="GO:0032933">
    <property type="term" value="P:SREBP signaling pathway"/>
    <property type="evidence" value="ECO:0000250"/>
    <property type="project" value="UniProtKB"/>
</dbReference>
<dbReference type="FunFam" id="2.130.10.10:FF:000209">
    <property type="entry name" value="sterol regulatory element-binding protein cleavage-activating protein-like"/>
    <property type="match status" value="1"/>
</dbReference>
<dbReference type="FunFam" id="2.130.10.10:FF:000391">
    <property type="entry name" value="sterol regulatory element-binding protein cleavage-activating protein-like"/>
    <property type="match status" value="1"/>
</dbReference>
<dbReference type="Gene3D" id="2.130.10.10">
    <property type="entry name" value="YVTN repeat-like/Quinoprotein amine dehydrogenase"/>
    <property type="match status" value="2"/>
</dbReference>
<dbReference type="InterPro" id="IPR057042">
    <property type="entry name" value="Beta-prop_SCAP"/>
</dbReference>
<dbReference type="InterPro" id="IPR053958">
    <property type="entry name" value="HMGCR/SNAP/NPC1-like_SSD"/>
</dbReference>
<dbReference type="InterPro" id="IPR030225">
    <property type="entry name" value="SCAP"/>
</dbReference>
<dbReference type="InterPro" id="IPR057041">
    <property type="entry name" value="SCAP_N"/>
</dbReference>
<dbReference type="InterPro" id="IPR000731">
    <property type="entry name" value="SSD"/>
</dbReference>
<dbReference type="InterPro" id="IPR015943">
    <property type="entry name" value="WD40/YVTN_repeat-like_dom_sf"/>
</dbReference>
<dbReference type="InterPro" id="IPR019775">
    <property type="entry name" value="WD40_repeat_CS"/>
</dbReference>
<dbReference type="InterPro" id="IPR036322">
    <property type="entry name" value="WD40_repeat_dom_sf"/>
</dbReference>
<dbReference type="InterPro" id="IPR001680">
    <property type="entry name" value="WD40_rpt"/>
</dbReference>
<dbReference type="PANTHER" id="PTHR46378">
    <property type="entry name" value="STEROL REGULATORY ELEMENT-BINDING PROTEIN CLEAVAGE-ACTIVATING PROTEIN"/>
    <property type="match status" value="1"/>
</dbReference>
<dbReference type="PANTHER" id="PTHR46378:SF1">
    <property type="entry name" value="STEROL REGULATORY ELEMENT-BINDING PROTEIN CLEAVAGE-ACTIVATING PROTEIN"/>
    <property type="match status" value="1"/>
</dbReference>
<dbReference type="Pfam" id="PF24017">
    <property type="entry name" value="Beta-prop_SCAP"/>
    <property type="match status" value="1"/>
</dbReference>
<dbReference type="Pfam" id="PF24006">
    <property type="entry name" value="SCAP_N"/>
    <property type="match status" value="1"/>
</dbReference>
<dbReference type="Pfam" id="PF12349">
    <property type="entry name" value="Sterol-sensing"/>
    <property type="match status" value="1"/>
</dbReference>
<dbReference type="SMART" id="SM00320">
    <property type="entry name" value="WD40"/>
    <property type="match status" value="6"/>
</dbReference>
<dbReference type="SUPFAM" id="SSF82866">
    <property type="entry name" value="Multidrug efflux transporter AcrB transmembrane domain"/>
    <property type="match status" value="1"/>
</dbReference>
<dbReference type="SUPFAM" id="SSF50978">
    <property type="entry name" value="WD40 repeat-like"/>
    <property type="match status" value="1"/>
</dbReference>
<dbReference type="PROSITE" id="PS50156">
    <property type="entry name" value="SSD"/>
    <property type="match status" value="1"/>
</dbReference>
<dbReference type="PROSITE" id="PS00678">
    <property type="entry name" value="WD_REPEATS_1"/>
    <property type="match status" value="1"/>
</dbReference>
<dbReference type="PROSITE" id="PS50082">
    <property type="entry name" value="WD_REPEATS_2"/>
    <property type="match status" value="2"/>
</dbReference>
<dbReference type="PROSITE" id="PS50294">
    <property type="entry name" value="WD_REPEATS_REGION"/>
    <property type="match status" value="1"/>
</dbReference>
<keyword id="KW-0025">Alternative splicing</keyword>
<keyword id="KW-0153">Cholesterol metabolism</keyword>
<keyword id="KW-0968">Cytoplasmic vesicle</keyword>
<keyword id="KW-0256">Endoplasmic reticulum</keyword>
<keyword id="KW-0325">Glycoprotein</keyword>
<keyword id="KW-0333">Golgi apparatus</keyword>
<keyword id="KW-1017">Isopeptide bond</keyword>
<keyword id="KW-0443">Lipid metabolism</keyword>
<keyword id="KW-0446">Lipid-binding</keyword>
<keyword id="KW-0472">Membrane</keyword>
<keyword id="KW-0488">Methylation</keyword>
<keyword id="KW-0597">Phosphoprotein</keyword>
<keyword id="KW-1185">Reference proteome</keyword>
<keyword id="KW-0677">Repeat</keyword>
<keyword id="KW-0753">Steroid metabolism</keyword>
<keyword id="KW-1207">Sterol metabolism</keyword>
<keyword id="KW-0812">Transmembrane</keyword>
<keyword id="KW-1133">Transmembrane helix</keyword>
<keyword id="KW-0832">Ubl conjugation</keyword>
<keyword id="KW-0853">WD repeat</keyword>
<organism>
    <name type="scientific">Sus scrofa</name>
    <name type="common">Pig</name>
    <dbReference type="NCBI Taxonomy" id="9823"/>
    <lineage>
        <taxon>Eukaryota</taxon>
        <taxon>Metazoa</taxon>
        <taxon>Chordata</taxon>
        <taxon>Craniata</taxon>
        <taxon>Vertebrata</taxon>
        <taxon>Euteleostomi</taxon>
        <taxon>Mammalia</taxon>
        <taxon>Eutheria</taxon>
        <taxon>Laurasiatheria</taxon>
        <taxon>Artiodactyla</taxon>
        <taxon>Suina</taxon>
        <taxon>Suidae</taxon>
        <taxon>Sus</taxon>
    </lineage>
</organism>
<name>SCAP_PIG</name>
<evidence type="ECO:0000250" key="1">
    <source>
        <dbReference type="UniProtKB" id="P97260"/>
    </source>
</evidence>
<evidence type="ECO:0000250" key="2">
    <source>
        <dbReference type="UniProtKB" id="Q12770"/>
    </source>
</evidence>
<evidence type="ECO:0000250" key="3">
    <source>
        <dbReference type="UniProtKB" id="Q6GQT6"/>
    </source>
</evidence>
<evidence type="ECO:0000255" key="4"/>
<evidence type="ECO:0000255" key="5">
    <source>
        <dbReference type="PROSITE-ProRule" id="PRU00199"/>
    </source>
</evidence>
<evidence type="ECO:0000256" key="6">
    <source>
        <dbReference type="SAM" id="MobiDB-lite"/>
    </source>
</evidence>
<evidence type="ECO:0000269" key="7">
    <source>
    </source>
</evidence>
<evidence type="ECO:0000303" key="8">
    <source>
    </source>
</evidence>
<evidence type="ECO:0000305" key="9"/>
<evidence type="ECO:0000312" key="10">
    <source>
        <dbReference type="EMBL" id="AAQ24843.1"/>
    </source>
</evidence>
<evidence type="ECO:0000312" key="11">
    <source>
        <dbReference type="EMBL" id="AAW19058.2"/>
    </source>
</evidence>
<evidence type="ECO:0000312" key="12">
    <source>
        <dbReference type="EMBL" id="AAW51130.1"/>
    </source>
</evidence>
<comment type="function">
    <text evidence="1">Escort protein required for cholesterol as well as lipid homeostasis (By similarity). Regulates export of the SCAP-SREBP complex from the endoplasmic reticulum to the Golgi upon low cholesterol, thereby regulating the processing of sterol regulatory element-binding proteins (SREBPs) SREBF1/SREBP1 and SREBF2/SREBP2 (By similarity). At high sterol concentrations, formation of a ternary complex with INSIG (INSIG1 or INSIG2) leads to mask the ER export signal in SCAP, promoting retention of the complex in the endoplasmic reticulum (By similarity). Low sterol concentrations trigger release of INSIG, a conformational change in the SSD domain of SCAP, unmasking of the ER export signal, promoting recruitment into COPII-coated vesicles and transport of the SCAP-SREBP to the Golgi: in the Golgi, SREBPs are then processed, releasing the transcription factor fragment of SREBPs from the membrane, its import into the nucleus and up-regulation of LDLR, INSIG1 and the mevalonate pathway (By similarity). Binds cholesterol via its SSD domain (By similarity).</text>
</comment>
<comment type="subunit">
    <text evidence="1 2">Membrane region forms a homotetramer (By similarity). Component of the SCAP-SREBP complex (composed of SCAP and SREBF1/SREBP1 or SREBF2/SREBP2); interacts with SREBF1/SREBP1 or SREBF2/SREBP2 through its C-terminal cytoplasmic domain (By similarity). Forms a ternary complex with INSIG1 or INSIG2 through its transmembrane domains at high sterol concentrations. Interacts with PAQR3; the interaction anchors the SCAP-SREBP complex to the Golgi apparatus in low cholesterol conditions (By similarity). Interacts with the SEC23-SEC24 complex in a SAR1-GTP-dependent manner through an ER export signal in its third cytoplasmic loop (By similarity). Interacts with RNF139; the interaction inhibits the interaction of SCAP with SEC24B and hampering the ER to Golgi transport of the SCAP-SREBP complex. Interacts with SPRING1 (By similarity).</text>
</comment>
<comment type="subcellular location">
    <subcellularLocation>
        <location evidence="2">Endoplasmic reticulum membrane</location>
        <topology evidence="4">Multi-pass membrane protein</topology>
    </subcellularLocation>
    <subcellularLocation>
        <location evidence="2">Golgi apparatus membrane</location>
        <topology evidence="4">Multi-pass membrane protein</topology>
    </subcellularLocation>
    <subcellularLocation>
        <location evidence="1">Cytoplasmic vesicle</location>
        <location evidence="1">COPII-coated vesicle membrane</location>
        <topology evidence="4">Multi-pass membrane protein</topology>
    </subcellularLocation>
    <text evidence="1 2">Moves from the endoplasmic reticulum to the Golgi in the absence of sterols. Requires the presence of SPRING1 for proper localization to endoplasmic reticulum.</text>
</comment>
<comment type="alternative products">
    <event type="alternative splicing"/>
    <isoform>
        <id>Q5MNU5-1</id>
        <name evidence="8">1</name>
        <sequence type="displayed"/>
    </isoform>
    <isoform>
        <id>Q5MNU5-2</id>
        <name evidence="8">2</name>
        <sequence type="described" ref="VSP_052641 VSP_052642"/>
    </isoform>
    <isoform>
        <id>Q5MNU5-3</id>
        <name evidence="8">3</name>
        <sequence type="described" ref="VSP_052639 VSP_052640"/>
    </isoform>
</comment>
<comment type="tissue specificity">
    <molecule>Isoform 1</molecule>
    <text evidence="7">Widely expressed with higher levels in lung, kidney, gut, brain and adipose tissue.</text>
</comment>
<comment type="tissue specificity">
    <molecule>Isoform 2</molecule>
    <text evidence="7">Expressed in liver and muscle. Isoform 3 expressed in testis.</text>
</comment>
<comment type="tissue specificity">
    <molecule>Isoform 3</molecule>
    <text evidence="7">Expressed in testis.</text>
</comment>
<comment type="domain">
    <text evidence="1">Loop-1 binds to loop-7, enabling interaction with COPII-coated vesicles. When levels of cholesterol in the endoplasmic reticulum increase, Loop-1 binds to cholesterol instead, thereby disrupting direct binding between the two loops and preventing the SCAP-SREBP complex from exiting the endoplasmic reticulum.</text>
</comment>
<comment type="domain">
    <text evidence="1">Cholesterol bound to SSD domain of SCAP or oxysterol bound to INSIG (INSIG1 or INSIG2) leads to masking of an ER export signal (also named MELADL motif) on SCAP possibly by moving the signal further away from the ER membrane.</text>
</comment>
<comment type="PTM">
    <text evidence="3">Ubiquitinated at Lys-454 and Lys-466. RNF145 triggers ubiquitination of SCAP, likely inhibiting SCAP-SREBP complex transport to the Golgi apparatus and the subsequent processing/maturation of SREBF2/SREBP2.</text>
</comment>
<comment type="similarity">
    <text evidence="9">Belongs to the WD repeat SCAP family.</text>
</comment>
<accession>Q5MNU5</accession>
<accession>Q0R5S1</accession>
<accession>Q0R5S2</accession>
<accession>Q3SBD2</accession>
<accession>Q5I387</accession>
<accession>Q5MJG7</accession>
<accession>Q5QCZ6</accession>
<accession>Q6VFU0</accession>
<sequence length="1279" mass="140058">MTLTERLREKISQAFYNHGLLCASYPIPIILFTGLCILACCYPLLKLPLPGTGPVEFTTPVKDYSPPPSASDHKPGEPSEQPEWYVGAPVAYIQQIFVKSSVSPWHKNLLAVDVFRSPLSRAFQLVEEIRNHVLRDSSGTRSLEEVCLQVTDLLPGLRKLRNILPEHGCLLLSPGNFWQNDRERFHADPDIIGTIHQHEPKTLQTSATLKDLLFGVPGKHSGVSLYTRKRLVSYTITLVFQHYHAKFLGSLRARLMLLHPSPNCSLRAESLVHVHFKEEIGIAELIPLVTTYIILFAYIYFSTRKIDMVKSKWGLALAAVVTVLSSLLMSVGLCTLFGLTPTLNGGEIFPYLVVVIGLENVLVLTKSVVSTPVDLEVKLRIAQGLSSESWSIMKNMATELGIILIGYFTLVPAIQEFCLFAVVGLVSDFFLQMPFFTTVLSIDIRRMELADLNKRLPPEACLPPAKPVGRSARFERQLAVRPATPHTITLQPSSFRNLRLPKRLRVIYFLARTRLAQRLIMAGTVVWIGILAYTDPAGLRTYLAAQVTEQSPLGEGALAPMPVPSGVLPASHPDPAFSIFPPEAPKLLENQTLPGEPPEPGGQAEGVHDSPAPEVTWGPEDEELWRKLSFRHWPTLFSYYNITLAKRYISLLPVIPVTLRLNPREALEGRHPQDSRSAWSPPQPAQGGLWDAGPKGPGVAQAHRDVTLYKVAALGLATGILLVLLLCLYRVLCPRNYGQPGAGPGRRRRGELPCDDYGYAPPETEIVPLVLRGHLMDIECLASDGMLLVSCCLAGHVCVWDAQTGDCLTRIPHPGRQRRDSGVGSVLEAQENWERLSDGGKASPEEPGDSPPLRHRPRGTPLPSLFGDQPDLTCLIDTNFSAHPRLPELDHPEPRHRSGCRRTQDCTGYDFSRLVQRAYQEEGMVPMHTPAPRPPSPGPTPPQTPEDEGSFPPEKGSPSFTWAPSADGSIWSLELQGNLIVVGRSSGRLEVWDAIEGMLRCSSEEVASGITALVFLDKRIVAARLNGSLDFFSLETHTALSPLQFRGAPGRGSSPTSPVYSSSDTVVCHLTHTVPCAHQKPITALKAAAGRLVTGSQDHTLRVFRLEDSCCLFTLQGHSGAITTVYIDQTMVLASGGQDGAICLWDVLTGSRVSHMFAHRGDVTSLTCTTSCVISSGLDDLISIWDRSTGIKLYSIQQDLGCGASLGVISDNLLVTGGQGCVSFWDLNYGDLLQTVYLGKDSEAQPARQILVLDNAAIVCNFGSELSLVYVPSVLEKLD</sequence>
<reference evidence="9 11" key="1">
    <citation type="journal article" date="2006" name="Mol. Genet. Genomics">
        <title>Cloning, comparative characterization of porcine SCAP gene, and identification of its two splice variants.</title>
        <authorList>
            <person name="Qiu H."/>
            <person name="Xia T."/>
            <person name="Chen X."/>
            <person name="Zhao X."/>
            <person name="Gan L."/>
            <person name="Feng S."/>
            <person name="Lei T."/>
            <person name="Yang Z."/>
        </authorList>
    </citation>
    <scope>NUCLEOTIDE SEQUENCE [MRNA] (ISOFORM 1)</scope>
    <scope>NUCLEOTIDE SEQUENCE [GENOMIC DNA] OF 1-44 AND 70-1279</scope>
    <scope>NUCLEOTIDE SEQUENCE [MRNA] OF 817-1114 (ISOFORMS 2 AND 3)</scope>
    <scope>TISSUE SPECIFICITY</scope>
</reference>
<reference evidence="9 12" key="2">
    <citation type="submission" date="2003-07" db="EMBL/GenBank/DDBJ databases">
        <title>Sequences of transcripts of porcine SREBP cleavage-activating protein (SCAP) and adiponectin.</title>
        <authorList>
            <person name="Thacker S.S."/>
            <person name="Bergen W.G."/>
        </authorList>
    </citation>
    <scope>NUCLEOTIDE SEQUENCE [MRNA] OF 1026-1107 (ISOFORM 1)</scope>
    <source>
        <tissue evidence="10">Adipose tissue</tissue>
    </source>
</reference>
<protein>
    <recommendedName>
        <fullName evidence="8">Sterol regulatory element-binding protein cleavage-activating protein</fullName>
        <shortName evidence="8">SCAP</shortName>
        <shortName evidence="8">SREBP cleavage-activating protein</shortName>
    </recommendedName>
</protein>
<feature type="chain" id="PRO_0000315871" description="Sterol regulatory element-binding protein cleavage-activating protein">
    <location>
        <begin position="1"/>
        <end position="1279"/>
    </location>
</feature>
<feature type="topological domain" description="Cytoplasmic" evidence="1">
    <location>
        <begin position="1"/>
        <end position="18"/>
    </location>
</feature>
<feature type="transmembrane region" description="Helical; Name=1" evidence="4">
    <location>
        <begin position="19"/>
        <end position="39"/>
    </location>
</feature>
<feature type="topological domain" description="Lumenal" evidence="1">
    <location>
        <begin position="40"/>
        <end position="279"/>
    </location>
</feature>
<feature type="transmembrane region" description="Helical; Name=2" evidence="4">
    <location>
        <begin position="280"/>
        <end position="300"/>
    </location>
</feature>
<feature type="topological domain" description="Cytoplasmic" evidence="1">
    <location>
        <begin position="301"/>
        <end position="312"/>
    </location>
</feature>
<feature type="transmembrane region" description="Helical; Name=3" evidence="4">
    <location>
        <begin position="313"/>
        <end position="333"/>
    </location>
</feature>
<feature type="topological domain" description="Lumenal" evidence="1">
    <location>
        <begin position="334"/>
        <end position="344"/>
    </location>
</feature>
<feature type="transmembrane region" description="Helical; Name=4" evidence="4">
    <location>
        <begin position="345"/>
        <end position="365"/>
    </location>
</feature>
<feature type="topological domain" description="Cytoplasmic" evidence="1">
    <location>
        <begin position="366"/>
        <end position="401"/>
    </location>
</feature>
<feature type="transmembrane region" description="Helical; Name=5" evidence="4">
    <location>
        <begin position="402"/>
        <end position="422"/>
    </location>
</feature>
<feature type="topological domain" description="Lumenal" evidence="1">
    <location>
        <position position="423"/>
    </location>
</feature>
<feature type="transmembrane region" description="Helical; Name=6" evidence="4">
    <location>
        <begin position="424"/>
        <end position="444"/>
    </location>
</feature>
<feature type="topological domain" description="Cytoplasmic" evidence="1">
    <location>
        <begin position="445"/>
        <end position="518"/>
    </location>
</feature>
<feature type="transmembrane region" description="Helical; Name=7" evidence="4">
    <location>
        <begin position="519"/>
        <end position="539"/>
    </location>
</feature>
<feature type="topological domain" description="Lumenal" evidence="1">
    <location>
        <begin position="540"/>
        <end position="707"/>
    </location>
</feature>
<feature type="transmembrane region" description="Helical; Name=8" evidence="4">
    <location>
        <begin position="708"/>
        <end position="728"/>
    </location>
</feature>
<feature type="topological domain" description="Cytoplasmic" evidence="1">
    <location>
        <begin position="729"/>
        <end position="1279"/>
    </location>
</feature>
<feature type="domain" description="SSD" evidence="5">
    <location>
        <begin position="284"/>
        <end position="442"/>
    </location>
</feature>
<feature type="repeat" description="WD 1" evidence="4">
    <location>
        <begin position="770"/>
        <end position="810"/>
    </location>
</feature>
<feature type="repeat" description="WD 2" evidence="4">
    <location>
        <begin position="952"/>
        <end position="1002"/>
    </location>
</feature>
<feature type="repeat" description="WD 3" evidence="4">
    <location>
        <begin position="1005"/>
        <end position="1042"/>
    </location>
</feature>
<feature type="repeat" description="WD 4" evidence="4">
    <location>
        <begin position="1077"/>
        <end position="1114"/>
    </location>
</feature>
<feature type="repeat" description="WD 5" evidence="4">
    <location>
        <begin position="1117"/>
        <end position="1155"/>
    </location>
</feature>
<feature type="repeat" description="WD 6" evidence="4">
    <location>
        <begin position="1158"/>
        <end position="1195"/>
    </location>
</feature>
<feature type="repeat" description="WD 7" evidence="4">
    <location>
        <begin position="1197"/>
        <end position="1235"/>
    </location>
</feature>
<feature type="region of interest" description="Loop-1" evidence="1">
    <location>
        <begin position="46"/>
        <end position="284"/>
    </location>
</feature>
<feature type="region of interest" description="Disordered" evidence="6">
    <location>
        <begin position="60"/>
        <end position="81"/>
    </location>
</feature>
<feature type="region of interest" description="Loop-7" evidence="1">
    <location>
        <begin position="535"/>
        <end position="710"/>
    </location>
</feature>
<feature type="region of interest" description="Disordered" evidence="6">
    <location>
        <begin position="588"/>
        <end position="617"/>
    </location>
</feature>
<feature type="region of interest" description="Disordered" evidence="6">
    <location>
        <begin position="668"/>
        <end position="696"/>
    </location>
</feature>
<feature type="region of interest" description="Interaction with SREBF2" evidence="1">
    <location>
        <begin position="730"/>
        <end position="1279"/>
    </location>
</feature>
<feature type="region of interest" description="Disordered" evidence="6">
    <location>
        <begin position="834"/>
        <end position="868"/>
    </location>
</feature>
<feature type="region of interest" description="Disordered" evidence="6">
    <location>
        <begin position="883"/>
        <end position="903"/>
    </location>
</feature>
<feature type="region of interest" description="Disordered" evidence="6">
    <location>
        <begin position="925"/>
        <end position="959"/>
    </location>
</feature>
<feature type="short sequence motif" description="ER export signal" evidence="1">
    <location>
        <begin position="447"/>
        <end position="452"/>
    </location>
</feature>
<feature type="compositionally biased region" description="Basic and acidic residues" evidence="6">
    <location>
        <begin position="885"/>
        <end position="896"/>
    </location>
</feature>
<feature type="compositionally biased region" description="Pro residues" evidence="6">
    <location>
        <begin position="929"/>
        <end position="944"/>
    </location>
</feature>
<feature type="modified residue" description="Phosphoserine" evidence="2">
    <location>
        <position position="821"/>
    </location>
</feature>
<feature type="modified residue" description="Phosphoserine" evidence="2">
    <location>
        <position position="837"/>
    </location>
</feature>
<feature type="modified residue" description="Phosphoserine" evidence="3">
    <location>
        <position position="843"/>
    </location>
</feature>
<feature type="modified residue" description="Phosphoserine" evidence="2">
    <location>
        <position position="850"/>
    </location>
</feature>
<feature type="modified residue" description="Phosphoserine" evidence="2">
    <location>
        <position position="936"/>
    </location>
</feature>
<feature type="modified residue" description="Omega-N-methylarginine" evidence="3">
    <location>
        <position position="1051"/>
    </location>
</feature>
<feature type="glycosylation site" description="N-linked (GlcNAc...) asparagine" evidence="4">
    <location>
        <position position="263"/>
    </location>
</feature>
<feature type="glycosylation site" description="N-linked (GlcNAc...) asparagine" evidence="4">
    <location>
        <position position="590"/>
    </location>
</feature>
<feature type="glycosylation site" description="N-linked (GlcNAc...) asparagine" evidence="4">
    <location>
        <position position="641"/>
    </location>
</feature>
<feature type="cross-link" description="Glycyl lysine isopeptide (Lys-Gly) (interchain with G-Cter in ubiquitin)" evidence="3">
    <location>
        <position position="454"/>
    </location>
</feature>
<feature type="cross-link" description="Glycyl lysine isopeptide (Lys-Gly) (interchain with G-Cter in ubiquitin)" evidence="3">
    <location>
        <position position="466"/>
    </location>
</feature>
<feature type="splice variant" id="VSP_052639" description="In isoform 3." evidence="8">
    <original>SGCRRTQDCTGY</original>
    <variation>CGTPLKACCAVA</variation>
    <location>
        <begin position="898"/>
        <end position="909"/>
    </location>
</feature>
<feature type="splice variant" id="VSP_052640" description="In isoform 3." evidence="8">
    <location>
        <begin position="910"/>
        <end position="1279"/>
    </location>
</feature>
<feature type="splice variant" id="VSP_052641" description="In isoform 2." evidence="8">
    <original>APRPPSPG</original>
    <variation>LKACCAVA</variation>
    <location>
        <begin position="931"/>
        <end position="938"/>
    </location>
</feature>
<feature type="splice variant" id="VSP_052642" description="In isoform 2." evidence="8">
    <location>
        <begin position="939"/>
        <end position="1279"/>
    </location>
</feature>
<feature type="sequence conflict" description="In Ref. 1; AAW19080." evidence="9" ref="1">
    <original>P</original>
    <variation>L</variation>
    <location>
        <position position="434"/>
    </location>
</feature>
<feature type="sequence conflict" description="In Ref. 1; AAW51130." evidence="9" ref="1">
    <original>A</original>
    <variation>V</variation>
    <location>
        <position position="532"/>
    </location>
</feature>
<feature type="sequence conflict" description="In Ref. 1; AAW19080." evidence="9" ref="1">
    <original>E</original>
    <variation>G</variation>
    <location>
        <position position="779"/>
    </location>
</feature>
<proteinExistence type="evidence at transcript level"/>
<gene>
    <name evidence="8" type="primary">SCAP</name>
</gene>